<accession>Q96RI9</accession>
<sequence length="348" mass="39016">MVNNFSQAEAVELCYKNVNESCIKTPYSPGPRSILYAVLGFGAVLAAFGNLLVMIAILHFKQLHTPTNFLIASLACADFLVGVTVMPFSTVRSVESCWYFGDSYCKFHTCFDTSFCFASLFHLCCISVDRYIAVTDPLTYPTKFTVSVSGICIVLSWFFSVTYSFSIFYTGANEEGIEELVVALTCVGGCQAPLNQNWVLLCFLLFFIPNVAMVFIYSKIFLVAKHQARKIESTASQAQSSSESYKERVAKRERKAAKTLGIAMAAFLVSWLPYLVDAVIDAYMNFITPPYVYEILVWCVYYNSAMNPLIYAFFYQWFGKAIKLIVSGKVLRTDSSTTNLFSEEVETD</sequence>
<feature type="chain" id="PRO_0000070181" description="Trace amine-associated receptor 9">
    <location>
        <begin position="1"/>
        <end position="348"/>
    </location>
</feature>
<feature type="topological domain" description="Extracellular" evidence="1">
    <location>
        <begin position="1"/>
        <end position="33"/>
    </location>
</feature>
<feature type="transmembrane region" description="Helical; Name=1" evidence="1">
    <location>
        <begin position="34"/>
        <end position="58"/>
    </location>
</feature>
<feature type="topological domain" description="Cytoplasmic" evidence="1">
    <location>
        <begin position="59"/>
        <end position="68"/>
    </location>
</feature>
<feature type="transmembrane region" description="Helical; Name=2" evidence="1">
    <location>
        <begin position="69"/>
        <end position="90"/>
    </location>
</feature>
<feature type="topological domain" description="Extracellular" evidence="1">
    <location>
        <begin position="91"/>
        <end position="105"/>
    </location>
</feature>
<feature type="transmembrane region" description="Helical; Name=3" evidence="1">
    <location>
        <begin position="106"/>
        <end position="128"/>
    </location>
</feature>
<feature type="topological domain" description="Cytoplasmic" evidence="1">
    <location>
        <begin position="129"/>
        <end position="148"/>
    </location>
</feature>
<feature type="transmembrane region" description="Helical; Name=4" evidence="1">
    <location>
        <begin position="149"/>
        <end position="170"/>
    </location>
</feature>
<feature type="topological domain" description="Extracellular" evidence="1">
    <location>
        <begin position="171"/>
        <end position="196"/>
    </location>
</feature>
<feature type="transmembrane region" description="Helical; Name=5" evidence="1">
    <location>
        <begin position="197"/>
        <end position="218"/>
    </location>
</feature>
<feature type="topological domain" description="Cytoplasmic" evidence="1">
    <location>
        <begin position="219"/>
        <end position="256"/>
    </location>
</feature>
<feature type="transmembrane region" description="Helical; Name=6" evidence="1">
    <location>
        <begin position="257"/>
        <end position="280"/>
    </location>
</feature>
<feature type="topological domain" description="Extracellular" evidence="1">
    <location>
        <begin position="281"/>
        <end position="293"/>
    </location>
</feature>
<feature type="transmembrane region" description="Helical; Name=7" evidence="1">
    <location>
        <begin position="294"/>
        <end position="314"/>
    </location>
</feature>
<feature type="topological domain" description="Cytoplasmic" evidence="1">
    <location>
        <begin position="315"/>
        <end position="348"/>
    </location>
</feature>
<feature type="region of interest" description="Extracellular Loop 2 (ECL2)" evidence="1">
    <location>
        <begin position="174"/>
        <end position="187"/>
    </location>
</feature>
<feature type="binding site" evidence="1">
    <location>
        <position position="112"/>
    </location>
    <ligand>
        <name>spermidine</name>
        <dbReference type="ChEBI" id="CHEBI:57834"/>
    </ligand>
</feature>
<feature type="binding site" evidence="1">
    <location>
        <position position="113"/>
    </location>
    <ligand>
        <name>spermidine</name>
        <dbReference type="ChEBI" id="CHEBI:57834"/>
    </ligand>
</feature>
<feature type="glycosylation site" description="N-linked (GlcNAc...) asparagine" evidence="2">
    <location>
        <position position="4"/>
    </location>
</feature>
<feature type="glycosylation site" description="N-linked (GlcNAc...) asparagine" evidence="2">
    <location>
        <position position="19"/>
    </location>
</feature>
<feature type="disulfide bond" evidence="1">
    <location>
        <begin position="22"/>
        <end position="186"/>
    </location>
</feature>
<feature type="disulfide bond" evidence="3">
    <location>
        <begin position="105"/>
        <end position="190"/>
    </location>
</feature>
<feature type="sequence variant" id="VAR_049449" description="In dbSNP:rs9389004.">
    <original>A</original>
    <variation>T</variation>
    <location>
        <position position="278"/>
    </location>
</feature>
<name>TAAR9_HUMAN</name>
<gene>
    <name evidence="6" type="primary">TAAR9</name>
    <name type="synonym">TA3</name>
    <name evidence="5" type="synonym">TAR3</name>
    <name evidence="5" type="synonym">TRAR3</name>
</gene>
<organism>
    <name type="scientific">Homo sapiens</name>
    <name type="common">Human</name>
    <dbReference type="NCBI Taxonomy" id="9606"/>
    <lineage>
        <taxon>Eukaryota</taxon>
        <taxon>Metazoa</taxon>
        <taxon>Chordata</taxon>
        <taxon>Craniata</taxon>
        <taxon>Vertebrata</taxon>
        <taxon>Euteleostomi</taxon>
        <taxon>Mammalia</taxon>
        <taxon>Eutheria</taxon>
        <taxon>Euarchontoglires</taxon>
        <taxon>Primates</taxon>
        <taxon>Haplorrhini</taxon>
        <taxon>Catarrhini</taxon>
        <taxon>Hominidae</taxon>
        <taxon>Homo</taxon>
    </lineage>
</organism>
<reference key="1">
    <citation type="journal article" date="2001" name="Proc. Natl. Acad. Sci. U.S.A.">
        <title>Trace amines: identification of a family of mammalian G protein-coupled receptors.</title>
        <authorList>
            <person name="Borowsky B."/>
            <person name="Adham N."/>
            <person name="Jones K.A."/>
            <person name="Raddatz R."/>
            <person name="Artymyshyn R."/>
            <person name="Ogozalek K.L."/>
            <person name="Durkin M.M."/>
            <person name="Lakhlani P.P."/>
            <person name="Bonini J.A."/>
            <person name="Pathirana S."/>
            <person name="Boyle N."/>
            <person name="Pu X."/>
            <person name="Kouranova E."/>
            <person name="Lichtblau H."/>
            <person name="Ochoa F.Y."/>
            <person name="Branchek T.A."/>
            <person name="Gerald C."/>
        </authorList>
    </citation>
    <scope>NUCLEOTIDE SEQUENCE [GENOMIC DNA]</scope>
</reference>
<reference key="2">
    <citation type="submission" date="2002-11" db="EMBL/GenBank/DDBJ databases">
        <title>cDNA clones of human proteins involved in signal transduction sequenced by the Guthrie cDNA resource center (www.cdna.org).</title>
        <authorList>
            <person name="Kopatz S.A."/>
            <person name="Aronstam R.S."/>
            <person name="Sharma S.V."/>
        </authorList>
    </citation>
    <scope>NUCLEOTIDE SEQUENCE [LARGE SCALE MRNA]</scope>
</reference>
<reference key="3">
    <citation type="journal article" date="2021" name="J. Biol. Chem.">
        <title>Convergent olfactory trace amine-associated receptors detect biogenic polyamines with distinct motifs via a conserved binding site.</title>
        <authorList>
            <person name="Jia L."/>
            <person name="Li S."/>
            <person name="Dai W."/>
            <person name="Guo L."/>
            <person name="Xu Z."/>
            <person name="Scott A.M."/>
            <person name="Zhang Z."/>
            <person name="Ren J."/>
            <person name="Zhang Q."/>
            <person name="Dexheimer T.S."/>
            <person name="Chung-Davidson Y.W."/>
            <person name="Neubig R.R."/>
            <person name="Li Q."/>
            <person name="Li W."/>
        </authorList>
    </citation>
    <scope>FUNCTION</scope>
</reference>
<evidence type="ECO:0000250" key="1">
    <source>
        <dbReference type="UniProtKB" id="Q5QD04"/>
    </source>
</evidence>
<evidence type="ECO:0000255" key="2"/>
<evidence type="ECO:0000255" key="3">
    <source>
        <dbReference type="PROSITE-ProRule" id="PRU00521"/>
    </source>
</evidence>
<evidence type="ECO:0000269" key="4">
    <source>
    </source>
</evidence>
<evidence type="ECO:0000303" key="5">
    <source>
    </source>
</evidence>
<evidence type="ECO:0000312" key="6">
    <source>
        <dbReference type="HGNC" id="HGNC:20977"/>
    </source>
</evidence>
<dbReference type="EMBL" id="AF380189">
    <property type="protein sequence ID" value="AAK71240.1"/>
    <property type="molecule type" value="Genomic_DNA"/>
</dbReference>
<dbReference type="EMBL" id="AY183469">
    <property type="protein sequence ID" value="AAO24660.1"/>
    <property type="molecule type" value="mRNA"/>
</dbReference>
<dbReference type="CCDS" id="CCDS75520.1"/>
<dbReference type="RefSeq" id="NP_778227.3">
    <property type="nucleotide sequence ID" value="NM_175057.3"/>
</dbReference>
<dbReference type="SMR" id="Q96RI9"/>
<dbReference type="BioGRID" id="126415">
    <property type="interactions" value="2"/>
</dbReference>
<dbReference type="FunCoup" id="Q96RI9">
    <property type="interactions" value="414"/>
</dbReference>
<dbReference type="IntAct" id="Q96RI9">
    <property type="interactions" value="2"/>
</dbReference>
<dbReference type="STRING" id="9606.ENSP00000424607"/>
<dbReference type="ChEMBL" id="CHEMBL4523911"/>
<dbReference type="GlyCosmos" id="Q96RI9">
    <property type="glycosylation" value="2 sites, No reported glycans"/>
</dbReference>
<dbReference type="GlyGen" id="Q96RI9">
    <property type="glycosylation" value="4 sites, 1 O-linked glycan (2 sites)"/>
</dbReference>
<dbReference type="iPTMnet" id="Q96RI9"/>
<dbReference type="PhosphoSitePlus" id="Q96RI9"/>
<dbReference type="BioMuta" id="TAAR9"/>
<dbReference type="DMDM" id="38258635"/>
<dbReference type="MassIVE" id="Q96RI9"/>
<dbReference type="PaxDb" id="9606-ENSP00000424607"/>
<dbReference type="Antibodypedia" id="72575">
    <property type="antibodies" value="124 antibodies from 21 providers"/>
</dbReference>
<dbReference type="DNASU" id="134860"/>
<dbReference type="Ensembl" id="ENST00000434551.3">
    <property type="protein sequence ID" value="ENSP00000424607.2"/>
    <property type="gene ID" value="ENSG00000237110.3"/>
</dbReference>
<dbReference type="GeneID" id="134860"/>
<dbReference type="KEGG" id="hsa:134860"/>
<dbReference type="MANE-Select" id="ENST00000434551.3">
    <property type="protein sequence ID" value="ENSP00000424607.2"/>
    <property type="RefSeq nucleotide sequence ID" value="NM_175057.4"/>
    <property type="RefSeq protein sequence ID" value="NP_778227.3"/>
</dbReference>
<dbReference type="UCSC" id="uc032xme.2">
    <property type="organism name" value="human"/>
</dbReference>
<dbReference type="AGR" id="HGNC:20977"/>
<dbReference type="CTD" id="134860"/>
<dbReference type="DisGeNET" id="134860"/>
<dbReference type="GeneCards" id="TAAR9"/>
<dbReference type="HGNC" id="HGNC:20977">
    <property type="gene designation" value="TAAR9"/>
</dbReference>
<dbReference type="HPA" id="ENSG00000237110">
    <property type="expression patterns" value="Not detected"/>
</dbReference>
<dbReference type="MIM" id="608282">
    <property type="type" value="gene"/>
</dbReference>
<dbReference type="neXtProt" id="NX_Q96RI9"/>
<dbReference type="OpenTargets" id="ENSG00000237110"/>
<dbReference type="PharmGKB" id="PA134931528"/>
<dbReference type="VEuPathDB" id="HostDB:ENSG00000237110"/>
<dbReference type="eggNOG" id="KOG3656">
    <property type="taxonomic scope" value="Eukaryota"/>
</dbReference>
<dbReference type="GeneTree" id="ENSGT00940000162919"/>
<dbReference type="HOGENOM" id="CLU_009579_11_0_1"/>
<dbReference type="InParanoid" id="Q96RI9"/>
<dbReference type="OMA" id="TCVRGCQ"/>
<dbReference type="OrthoDB" id="5959645at2759"/>
<dbReference type="PAN-GO" id="Q96RI9">
    <property type="GO annotations" value="1 GO annotation based on evolutionary models"/>
</dbReference>
<dbReference type="PhylomeDB" id="Q96RI9"/>
<dbReference type="PathwayCommons" id="Q96RI9"/>
<dbReference type="Reactome" id="R-HSA-375280">
    <property type="pathway name" value="Amine ligand-binding receptors"/>
</dbReference>
<dbReference type="Reactome" id="R-HSA-418555">
    <property type="pathway name" value="G alpha (s) signalling events"/>
</dbReference>
<dbReference type="SignaLink" id="Q96RI9"/>
<dbReference type="BioGRID-ORCS" id="134860">
    <property type="hits" value="9 hits in 293 CRISPR screens"/>
</dbReference>
<dbReference type="GeneWiki" id="TAAR9"/>
<dbReference type="GenomeRNAi" id="134860"/>
<dbReference type="Pharos" id="Q96RI9">
    <property type="development level" value="Tbio"/>
</dbReference>
<dbReference type="PRO" id="PR:Q96RI9"/>
<dbReference type="Proteomes" id="UP000005640">
    <property type="component" value="Chromosome 6"/>
</dbReference>
<dbReference type="RNAct" id="Q96RI9">
    <property type="molecule type" value="protein"/>
</dbReference>
<dbReference type="Bgee" id="ENSG00000237110">
    <property type="expression patterns" value="Expressed in cortical plate"/>
</dbReference>
<dbReference type="GO" id="GO:0005886">
    <property type="term" value="C:plasma membrane"/>
    <property type="evidence" value="ECO:0000250"/>
    <property type="project" value="UniProtKB"/>
</dbReference>
<dbReference type="GO" id="GO:0004930">
    <property type="term" value="F:G protein-coupled receptor activity"/>
    <property type="evidence" value="ECO:0000304"/>
    <property type="project" value="GDB"/>
</dbReference>
<dbReference type="GO" id="GO:0001594">
    <property type="term" value="F:trace-amine receptor activity"/>
    <property type="evidence" value="ECO:0000250"/>
    <property type="project" value="UniProtKB"/>
</dbReference>
<dbReference type="GO" id="GO:0007189">
    <property type="term" value="P:adenylate cyclase-activating G protein-coupled receptor signaling pathway"/>
    <property type="evidence" value="ECO:0000250"/>
    <property type="project" value="UniProtKB"/>
</dbReference>
<dbReference type="GO" id="GO:0007186">
    <property type="term" value="P:G protein-coupled receptor signaling pathway"/>
    <property type="evidence" value="ECO:0000318"/>
    <property type="project" value="GO_Central"/>
</dbReference>
<dbReference type="GO" id="GO:0007608">
    <property type="term" value="P:sensory perception of smell"/>
    <property type="evidence" value="ECO:0000250"/>
    <property type="project" value="UniProt"/>
</dbReference>
<dbReference type="CDD" id="cd15316">
    <property type="entry name" value="7tmA_TAAR6_8_9"/>
    <property type="match status" value="1"/>
</dbReference>
<dbReference type="FunFam" id="1.20.1070.10:FF:000030">
    <property type="entry name" value="trace amine-associated receptor 1"/>
    <property type="match status" value="1"/>
</dbReference>
<dbReference type="Gene3D" id="1.20.1070.10">
    <property type="entry name" value="Rhodopsin 7-helix transmembrane proteins"/>
    <property type="match status" value="1"/>
</dbReference>
<dbReference type="InterPro" id="IPR000276">
    <property type="entry name" value="GPCR_Rhodpsn"/>
</dbReference>
<dbReference type="InterPro" id="IPR017452">
    <property type="entry name" value="GPCR_Rhodpsn_7TM"/>
</dbReference>
<dbReference type="InterPro" id="IPR050569">
    <property type="entry name" value="TAAR"/>
</dbReference>
<dbReference type="InterPro" id="IPR009132">
    <property type="entry name" value="TAAR_fam"/>
</dbReference>
<dbReference type="PANTHER" id="PTHR24249">
    <property type="entry name" value="HISTAMINE RECEPTOR-RELATED G-PROTEIN COUPLED RECEPTOR"/>
    <property type="match status" value="1"/>
</dbReference>
<dbReference type="PANTHER" id="PTHR24249:SF79">
    <property type="entry name" value="TRACE AMINE-ASSOCIATED RECEPTOR 9"/>
    <property type="match status" value="1"/>
</dbReference>
<dbReference type="Pfam" id="PF00001">
    <property type="entry name" value="7tm_1"/>
    <property type="match status" value="1"/>
</dbReference>
<dbReference type="PRINTS" id="PR00237">
    <property type="entry name" value="GPCRRHODOPSN"/>
</dbReference>
<dbReference type="PRINTS" id="PR01830">
    <property type="entry name" value="TRACEAMINER"/>
</dbReference>
<dbReference type="SMART" id="SM01381">
    <property type="entry name" value="7TM_GPCR_Srsx"/>
    <property type="match status" value="1"/>
</dbReference>
<dbReference type="SUPFAM" id="SSF81321">
    <property type="entry name" value="Family A G protein-coupled receptor-like"/>
    <property type="match status" value="1"/>
</dbReference>
<dbReference type="PROSITE" id="PS00237">
    <property type="entry name" value="G_PROTEIN_RECEP_F1_1"/>
    <property type="match status" value="1"/>
</dbReference>
<dbReference type="PROSITE" id="PS50262">
    <property type="entry name" value="G_PROTEIN_RECEP_F1_2"/>
    <property type="match status" value="1"/>
</dbReference>
<proteinExistence type="evidence at protein level"/>
<comment type="function">
    <text evidence="1 4">Olfactory receptor specific for trace amines, such as N,N-dimethylcyclohexylamine (DMCHA) and beta-phenylethylamine (beta-PEA) (By similarity). In contrast to mouse and rat orthologs, not activated by triethylamine, cadaverine (CAD) or spermidine (PubMed:34600890). Trace amine compounds are enriched in animal body fluids and act on trace amine-associated receptors (TAARs) to elicit both intraspecific and interspecific innate behaviors (By similarity). Trace amine-binding causes a conformation change that triggers signaling via G(s)-class of G alpha proteins (GNAL or GNAS) (By similarity). In mature olfactory sensory neurons, TAAR9 is coupled with GNAL/G(olf)G alpha protein and mediates activation of adenylate cyclase activity to activate cAMP signaling and eventually transmit odorant signals to achieve membrane depolarization (By similarity). In immature olfactory sensory neurons, TAAR9 is coupled with GNAS/G(s) G alpha proteins (By similarity).</text>
</comment>
<comment type="interaction">
    <interactant intactId="EBI-12908048">
        <id>Q96RI9</id>
    </interactant>
    <interactant intactId="EBI-12266234">
        <id>Q8IVJ1</id>
        <label>SLC41A1</label>
    </interactant>
    <organismsDiffer>false</organismsDiffer>
    <experiments>3</experiments>
</comment>
<comment type="interaction">
    <interactant intactId="EBI-12908048">
        <id>Q96RI9</id>
    </interactant>
    <interactant intactId="EBI-11988865">
        <id>A5PKU2</id>
        <label>TUSC5</label>
    </interactant>
    <organismsDiffer>false</organismsDiffer>
    <experiments>3</experiments>
</comment>
<comment type="subcellular location">
    <subcellularLocation>
        <location evidence="1">Cell membrane</location>
        <topology evidence="1">Multi-pass membrane protein</topology>
    </subcellularLocation>
</comment>
<comment type="domain">
    <text evidence="1">In addition to the well known disulfide bond common to G-protein coupled receptor 1 family, trace amine-associated receptors (TAARs) contain an unique disulfide bond (Cys-22-Cys-186) connecting the N-terminus to the extracellular Loop 2 (ECL2), which is required for agonist-induced receptor activation.</text>
</comment>
<comment type="similarity">
    <text evidence="3">Belongs to the G-protein coupled receptor 1 family.</text>
</comment>
<protein>
    <recommendedName>
        <fullName>Trace amine-associated receptor 9</fullName>
        <shortName>TaR-9</shortName>
        <shortName>Trace amine receptor 9</shortName>
    </recommendedName>
    <alternativeName>
        <fullName evidence="5">Trace amine receptor 3</fullName>
        <shortName evidence="5">TaR-3</shortName>
    </alternativeName>
</protein>
<keyword id="KW-1003">Cell membrane</keyword>
<keyword id="KW-1015">Disulfide bond</keyword>
<keyword id="KW-0297">G-protein coupled receptor</keyword>
<keyword id="KW-0325">Glycoprotein</keyword>
<keyword id="KW-0472">Membrane</keyword>
<keyword id="KW-0675">Receptor</keyword>
<keyword id="KW-1185">Reference proteome</keyword>
<keyword id="KW-0807">Transducer</keyword>
<keyword id="KW-0812">Transmembrane</keyword>
<keyword id="KW-1133">Transmembrane helix</keyword>